<organism>
    <name type="scientific">Salmonella gallinarum (strain 287/91 / NCTC 13346)</name>
    <dbReference type="NCBI Taxonomy" id="550538"/>
    <lineage>
        <taxon>Bacteria</taxon>
        <taxon>Pseudomonadati</taxon>
        <taxon>Pseudomonadota</taxon>
        <taxon>Gammaproteobacteria</taxon>
        <taxon>Enterobacterales</taxon>
        <taxon>Enterobacteriaceae</taxon>
        <taxon>Salmonella</taxon>
    </lineage>
</organism>
<feature type="chain" id="PRO_1000146725" description="p-hydroxybenzoic acid efflux pump subunit AaeA">
    <location>
        <begin position="1"/>
        <end position="310"/>
    </location>
</feature>
<feature type="transmembrane region" description="Helical" evidence="1">
    <location>
        <begin position="12"/>
        <end position="32"/>
    </location>
</feature>
<sequence length="310" mass="34529">MKTLTRKLSRTAITLVLVILAFIAIFRAWVYYTESPWTRDARFSADVVAIAPDVAGLITHVNVHDNQLVKKDQVLFTIDQPRYQKALAEAEADVAYYQVLAQEKRQEAGRRNRLGVQAMSREEIDQANNVLQTVLHQLAKAQATRDLAKLDPERTVIRAPADGWVTNLNVYAGEFITRGSTAVALVKKNSFYVQAYMEETKLEGVRPGYRAEITPLGSNRVLKGTVDSVAAGVTNASSTSDAKGMATIDSNLEWVRLAQRVPVRIRLDEQQGNLWPAGTTATVVITGKQDRDASQDSFFRKLAHRLREFG</sequence>
<gene>
    <name evidence="1" type="primary">aaeA</name>
    <name type="ordered locus">SG3255</name>
</gene>
<reference key="1">
    <citation type="journal article" date="2008" name="Genome Res.">
        <title>Comparative genome analysis of Salmonella enteritidis PT4 and Salmonella gallinarum 287/91 provides insights into evolutionary and host adaptation pathways.</title>
        <authorList>
            <person name="Thomson N.R."/>
            <person name="Clayton D.J."/>
            <person name="Windhorst D."/>
            <person name="Vernikos G."/>
            <person name="Davidson S."/>
            <person name="Churcher C."/>
            <person name="Quail M.A."/>
            <person name="Stevens M."/>
            <person name="Jones M.A."/>
            <person name="Watson M."/>
            <person name="Barron A."/>
            <person name="Layton A."/>
            <person name="Pickard D."/>
            <person name="Kingsley R.A."/>
            <person name="Bignell A."/>
            <person name="Clark L."/>
            <person name="Harris B."/>
            <person name="Ormond D."/>
            <person name="Abdellah Z."/>
            <person name="Brooks K."/>
            <person name="Cherevach I."/>
            <person name="Chillingworth T."/>
            <person name="Woodward J."/>
            <person name="Norberczak H."/>
            <person name="Lord A."/>
            <person name="Arrowsmith C."/>
            <person name="Jagels K."/>
            <person name="Moule S."/>
            <person name="Mungall K."/>
            <person name="Saunders M."/>
            <person name="Whitehead S."/>
            <person name="Chabalgoity J.A."/>
            <person name="Maskell D."/>
            <person name="Humphreys T."/>
            <person name="Roberts M."/>
            <person name="Barrow P.A."/>
            <person name="Dougan G."/>
            <person name="Parkhill J."/>
        </authorList>
    </citation>
    <scope>NUCLEOTIDE SEQUENCE [LARGE SCALE GENOMIC DNA]</scope>
    <source>
        <strain>287/91 / NCTC 13346</strain>
    </source>
</reference>
<protein>
    <recommendedName>
        <fullName evidence="1">p-hydroxybenzoic acid efflux pump subunit AaeA</fullName>
        <shortName evidence="1">pHBA efflux pump protein A</shortName>
    </recommendedName>
</protein>
<proteinExistence type="inferred from homology"/>
<evidence type="ECO:0000255" key="1">
    <source>
        <dbReference type="HAMAP-Rule" id="MF_01544"/>
    </source>
</evidence>
<accession>B5REW3</accession>
<dbReference type="EMBL" id="AM933173">
    <property type="protein sequence ID" value="CAR39053.1"/>
    <property type="molecule type" value="Genomic_DNA"/>
</dbReference>
<dbReference type="RefSeq" id="WP_000855137.1">
    <property type="nucleotide sequence ID" value="NC_011274.1"/>
</dbReference>
<dbReference type="SMR" id="B5REW3"/>
<dbReference type="KEGG" id="seg:SG3255"/>
<dbReference type="HOGENOM" id="CLU_018816_15_2_6"/>
<dbReference type="Proteomes" id="UP000008321">
    <property type="component" value="Chromosome"/>
</dbReference>
<dbReference type="GO" id="GO:0005886">
    <property type="term" value="C:plasma membrane"/>
    <property type="evidence" value="ECO:0007669"/>
    <property type="project" value="UniProtKB-SubCell"/>
</dbReference>
<dbReference type="GO" id="GO:0022857">
    <property type="term" value="F:transmembrane transporter activity"/>
    <property type="evidence" value="ECO:0007669"/>
    <property type="project" value="UniProtKB-UniRule"/>
</dbReference>
<dbReference type="FunFam" id="2.40.30.170:FF:000002">
    <property type="entry name" value="p-hydroxybenzoic acid efflux pump subunit AaeA"/>
    <property type="match status" value="1"/>
</dbReference>
<dbReference type="FunFam" id="2.40.50.100:FF:000018">
    <property type="entry name" value="p-hydroxybenzoic acid efflux pump subunit AaeA"/>
    <property type="match status" value="1"/>
</dbReference>
<dbReference type="Gene3D" id="2.40.30.170">
    <property type="match status" value="1"/>
</dbReference>
<dbReference type="Gene3D" id="2.40.50.100">
    <property type="match status" value="1"/>
</dbReference>
<dbReference type="HAMAP" id="MF_01544">
    <property type="entry name" value="AaeA"/>
    <property type="match status" value="1"/>
</dbReference>
<dbReference type="InterPro" id="IPR043602">
    <property type="entry name" value="CusB-like_dom_1"/>
</dbReference>
<dbReference type="InterPro" id="IPR032317">
    <property type="entry name" value="CusB_D23"/>
</dbReference>
<dbReference type="InterPro" id="IPR050393">
    <property type="entry name" value="MFP_Efflux_Pump"/>
</dbReference>
<dbReference type="InterPro" id="IPR022871">
    <property type="entry name" value="PHBA_efflux_pump_AaeA"/>
</dbReference>
<dbReference type="InterPro" id="IPR006143">
    <property type="entry name" value="RND_pump_MFP"/>
</dbReference>
<dbReference type="NCBIfam" id="NF007850">
    <property type="entry name" value="PRK10559.1"/>
    <property type="match status" value="1"/>
</dbReference>
<dbReference type="NCBIfam" id="TIGR01730">
    <property type="entry name" value="RND_mfp"/>
    <property type="match status" value="1"/>
</dbReference>
<dbReference type="PANTHER" id="PTHR30367:SF12">
    <property type="entry name" value="P-HYDROXYBENZOIC ACID EFFLUX PUMP SUBUNIT AAEA"/>
    <property type="match status" value="1"/>
</dbReference>
<dbReference type="PANTHER" id="PTHR30367">
    <property type="entry name" value="P-HYDROXYBENZOIC ACID EFFLUX PUMP SUBUNIT AAEA-RELATED"/>
    <property type="match status" value="1"/>
</dbReference>
<dbReference type="Pfam" id="PF00529">
    <property type="entry name" value="CusB_dom_1"/>
    <property type="match status" value="1"/>
</dbReference>
<dbReference type="Pfam" id="PF16576">
    <property type="entry name" value="HlyD_D23"/>
    <property type="match status" value="1"/>
</dbReference>
<dbReference type="SUPFAM" id="SSF111369">
    <property type="entry name" value="HlyD-like secretion proteins"/>
    <property type="match status" value="1"/>
</dbReference>
<name>AAEA_SALG2</name>
<keyword id="KW-0997">Cell inner membrane</keyword>
<keyword id="KW-1003">Cell membrane</keyword>
<keyword id="KW-0472">Membrane</keyword>
<keyword id="KW-0812">Transmembrane</keyword>
<keyword id="KW-1133">Transmembrane helix</keyword>
<keyword id="KW-0813">Transport</keyword>
<comment type="function">
    <text evidence="1">Forms an efflux pump with AaeB.</text>
</comment>
<comment type="subcellular location">
    <subcellularLocation>
        <location evidence="1">Cell inner membrane</location>
        <topology evidence="1">Single-pass membrane protein</topology>
    </subcellularLocation>
</comment>
<comment type="similarity">
    <text evidence="1">Belongs to the membrane fusion protein (MFP) (TC 8.A.1) family.</text>
</comment>